<evidence type="ECO:0000255" key="1">
    <source>
        <dbReference type="HAMAP-Rule" id="MF_00001"/>
    </source>
</evidence>
<dbReference type="EC" id="2.1.3.2" evidence="1"/>
<dbReference type="EMBL" id="CP001403">
    <property type="protein sequence ID" value="ACP45784.1"/>
    <property type="molecule type" value="Genomic_DNA"/>
</dbReference>
<dbReference type="RefSeq" id="WP_012713800.1">
    <property type="nucleotide sequence ID" value="NC_012622.1"/>
</dbReference>
<dbReference type="SMR" id="C3NEP5"/>
<dbReference type="GeneID" id="7810099"/>
<dbReference type="KEGG" id="siy:YG5714_1522"/>
<dbReference type="HOGENOM" id="CLU_043846_1_2_2"/>
<dbReference type="UniPathway" id="UPA00070">
    <property type="reaction ID" value="UER00116"/>
</dbReference>
<dbReference type="Proteomes" id="UP000002308">
    <property type="component" value="Chromosome"/>
</dbReference>
<dbReference type="GO" id="GO:0016597">
    <property type="term" value="F:amino acid binding"/>
    <property type="evidence" value="ECO:0007669"/>
    <property type="project" value="InterPro"/>
</dbReference>
<dbReference type="GO" id="GO:0004070">
    <property type="term" value="F:aspartate carbamoyltransferase activity"/>
    <property type="evidence" value="ECO:0007669"/>
    <property type="project" value="UniProtKB-UniRule"/>
</dbReference>
<dbReference type="GO" id="GO:0006207">
    <property type="term" value="P:'de novo' pyrimidine nucleobase biosynthetic process"/>
    <property type="evidence" value="ECO:0007669"/>
    <property type="project" value="InterPro"/>
</dbReference>
<dbReference type="GO" id="GO:0044205">
    <property type="term" value="P:'de novo' UMP biosynthetic process"/>
    <property type="evidence" value="ECO:0007669"/>
    <property type="project" value="UniProtKB-UniRule"/>
</dbReference>
<dbReference type="GO" id="GO:0006520">
    <property type="term" value="P:amino acid metabolic process"/>
    <property type="evidence" value="ECO:0007669"/>
    <property type="project" value="InterPro"/>
</dbReference>
<dbReference type="FunFam" id="3.40.50.1370:FF:000021">
    <property type="entry name" value="Aspartate carbamoyltransferase"/>
    <property type="match status" value="1"/>
</dbReference>
<dbReference type="Gene3D" id="3.40.50.1370">
    <property type="entry name" value="Aspartate/ornithine carbamoyltransferase"/>
    <property type="match status" value="2"/>
</dbReference>
<dbReference type="HAMAP" id="MF_00001">
    <property type="entry name" value="Asp_carb_tr"/>
    <property type="match status" value="1"/>
</dbReference>
<dbReference type="InterPro" id="IPR006132">
    <property type="entry name" value="Asp/Orn_carbamoyltranf_P-bd"/>
</dbReference>
<dbReference type="InterPro" id="IPR006130">
    <property type="entry name" value="Asp/Orn_carbamoylTrfase"/>
</dbReference>
<dbReference type="InterPro" id="IPR036901">
    <property type="entry name" value="Asp/Orn_carbamoylTrfase_sf"/>
</dbReference>
<dbReference type="InterPro" id="IPR002082">
    <property type="entry name" value="Asp_carbamoyltransf"/>
</dbReference>
<dbReference type="InterPro" id="IPR006131">
    <property type="entry name" value="Asp_carbamoyltransf_Asp/Orn-bd"/>
</dbReference>
<dbReference type="NCBIfam" id="TIGR00670">
    <property type="entry name" value="asp_carb_tr"/>
    <property type="match status" value="1"/>
</dbReference>
<dbReference type="NCBIfam" id="NF002032">
    <property type="entry name" value="PRK00856.1"/>
    <property type="match status" value="1"/>
</dbReference>
<dbReference type="PANTHER" id="PTHR45753:SF6">
    <property type="entry name" value="ASPARTATE CARBAMOYLTRANSFERASE"/>
    <property type="match status" value="1"/>
</dbReference>
<dbReference type="PANTHER" id="PTHR45753">
    <property type="entry name" value="ORNITHINE CARBAMOYLTRANSFERASE, MITOCHONDRIAL"/>
    <property type="match status" value="1"/>
</dbReference>
<dbReference type="Pfam" id="PF00185">
    <property type="entry name" value="OTCace"/>
    <property type="match status" value="1"/>
</dbReference>
<dbReference type="Pfam" id="PF02729">
    <property type="entry name" value="OTCace_N"/>
    <property type="match status" value="1"/>
</dbReference>
<dbReference type="PRINTS" id="PR00100">
    <property type="entry name" value="AOTCASE"/>
</dbReference>
<dbReference type="PRINTS" id="PR00101">
    <property type="entry name" value="ATCASE"/>
</dbReference>
<dbReference type="SUPFAM" id="SSF53671">
    <property type="entry name" value="Aspartate/ornithine carbamoyltransferase"/>
    <property type="match status" value="1"/>
</dbReference>
<dbReference type="PROSITE" id="PS00097">
    <property type="entry name" value="CARBAMOYLTRANSFERASE"/>
    <property type="match status" value="1"/>
</dbReference>
<sequence length="303" mass="34604">MRLRHVVSSLDLTRDDYFRIFELADKFSNVKKLNYLSGKVVSLAFFEPSTRTAQSFHTAAIKLGADVIGFASEESTSIAKGENLADTIRMLNNYSNCIVMRHKFDGAALFASEISDIPIINAGDGKHEHPTQALIDLYTIYKVFGEIDGRTFGLLGDLKYARTVNSLLRALTRFKPKKVFLISPSQLKVRREILDGLNYPVIETENPYDVIQDIDVLYVTRIQKERFVDEVEYEKVKESYVVDLKLVNMMKKDGIILHPLPRVTEIDRKVDKTTNAKYFYQASLAVPVRMALFYEVLGERKDD</sequence>
<protein>
    <recommendedName>
        <fullName evidence="1">Aspartate carbamoyltransferase catalytic subunit</fullName>
        <ecNumber evidence="1">2.1.3.2</ecNumber>
    </recommendedName>
    <alternativeName>
        <fullName evidence="1">Aspartate transcarbamylase</fullName>
        <shortName evidence="1">ATCase</shortName>
    </alternativeName>
</protein>
<comment type="function">
    <text evidence="1">Catalyzes the condensation of carbamoyl phosphate and aspartate to form carbamoyl aspartate and inorganic phosphate, the committed step in the de novo pyrimidine nucleotide biosynthesis pathway.</text>
</comment>
<comment type="catalytic activity">
    <reaction evidence="1">
        <text>carbamoyl phosphate + L-aspartate = N-carbamoyl-L-aspartate + phosphate + H(+)</text>
        <dbReference type="Rhea" id="RHEA:20013"/>
        <dbReference type="ChEBI" id="CHEBI:15378"/>
        <dbReference type="ChEBI" id="CHEBI:29991"/>
        <dbReference type="ChEBI" id="CHEBI:32814"/>
        <dbReference type="ChEBI" id="CHEBI:43474"/>
        <dbReference type="ChEBI" id="CHEBI:58228"/>
        <dbReference type="EC" id="2.1.3.2"/>
    </reaction>
</comment>
<comment type="pathway">
    <text evidence="1">Pyrimidine metabolism; UMP biosynthesis via de novo pathway; (S)-dihydroorotate from bicarbonate: step 2/3.</text>
</comment>
<comment type="subunit">
    <text evidence="1">Heterooligomer of catalytic and regulatory chains.</text>
</comment>
<comment type="similarity">
    <text evidence="1">Belongs to the aspartate/ornithine carbamoyltransferase superfamily. ATCase family.</text>
</comment>
<name>PYRB_SACI7</name>
<gene>
    <name evidence="1" type="primary">pyrB</name>
    <name type="ordered locus">YG5714_1522</name>
</gene>
<organism>
    <name type="scientific">Saccharolobus islandicus (strain Y.G.57.14 / Yellowstone #1)</name>
    <name type="common">Sulfolobus islandicus</name>
    <dbReference type="NCBI Taxonomy" id="439386"/>
    <lineage>
        <taxon>Archaea</taxon>
        <taxon>Thermoproteota</taxon>
        <taxon>Thermoprotei</taxon>
        <taxon>Sulfolobales</taxon>
        <taxon>Sulfolobaceae</taxon>
        <taxon>Saccharolobus</taxon>
    </lineage>
</organism>
<reference key="1">
    <citation type="journal article" date="2009" name="Proc. Natl. Acad. Sci. U.S.A.">
        <title>Biogeography of the Sulfolobus islandicus pan-genome.</title>
        <authorList>
            <person name="Reno M.L."/>
            <person name="Held N.L."/>
            <person name="Fields C.J."/>
            <person name="Burke P.V."/>
            <person name="Whitaker R.J."/>
        </authorList>
    </citation>
    <scope>NUCLEOTIDE SEQUENCE [LARGE SCALE GENOMIC DNA]</scope>
    <source>
        <strain>Y.G.57.14 / Yellowstone #1</strain>
    </source>
</reference>
<proteinExistence type="inferred from homology"/>
<keyword id="KW-0665">Pyrimidine biosynthesis</keyword>
<keyword id="KW-0808">Transferase</keyword>
<feature type="chain" id="PRO_1000201606" description="Aspartate carbamoyltransferase catalytic subunit">
    <location>
        <begin position="1"/>
        <end position="303"/>
    </location>
</feature>
<feature type="binding site" evidence="1">
    <location>
        <position position="51"/>
    </location>
    <ligand>
        <name>carbamoyl phosphate</name>
        <dbReference type="ChEBI" id="CHEBI:58228"/>
    </ligand>
</feature>
<feature type="binding site" evidence="1">
    <location>
        <position position="52"/>
    </location>
    <ligand>
        <name>carbamoyl phosphate</name>
        <dbReference type="ChEBI" id="CHEBI:58228"/>
    </ligand>
</feature>
<feature type="binding site" evidence="1">
    <location>
        <position position="80"/>
    </location>
    <ligand>
        <name>L-aspartate</name>
        <dbReference type="ChEBI" id="CHEBI:29991"/>
    </ligand>
</feature>
<feature type="binding site" evidence="1">
    <location>
        <position position="101"/>
    </location>
    <ligand>
        <name>carbamoyl phosphate</name>
        <dbReference type="ChEBI" id="CHEBI:58228"/>
    </ligand>
</feature>
<feature type="binding site" evidence="1">
    <location>
        <position position="129"/>
    </location>
    <ligand>
        <name>carbamoyl phosphate</name>
        <dbReference type="ChEBI" id="CHEBI:58228"/>
    </ligand>
</feature>
<feature type="binding site" evidence="1">
    <location>
        <position position="132"/>
    </location>
    <ligand>
        <name>carbamoyl phosphate</name>
        <dbReference type="ChEBI" id="CHEBI:58228"/>
    </ligand>
</feature>
<feature type="binding site" evidence="1">
    <location>
        <position position="162"/>
    </location>
    <ligand>
        <name>L-aspartate</name>
        <dbReference type="ChEBI" id="CHEBI:29991"/>
    </ligand>
</feature>
<feature type="binding site" evidence="1">
    <location>
        <position position="221"/>
    </location>
    <ligand>
        <name>L-aspartate</name>
        <dbReference type="ChEBI" id="CHEBI:29991"/>
    </ligand>
</feature>
<feature type="binding site" evidence="1">
    <location>
        <position position="260"/>
    </location>
    <ligand>
        <name>carbamoyl phosphate</name>
        <dbReference type="ChEBI" id="CHEBI:58228"/>
    </ligand>
</feature>
<feature type="binding site" evidence="1">
    <location>
        <position position="261"/>
    </location>
    <ligand>
        <name>carbamoyl phosphate</name>
        <dbReference type="ChEBI" id="CHEBI:58228"/>
    </ligand>
</feature>
<accession>C3NEP5</accession>